<dbReference type="EMBL" id="AF315352">
    <property type="protein sequence ID" value="AAK02018.1"/>
    <property type="status" value="ALT_FRAME"/>
    <property type="molecule type" value="mRNA"/>
</dbReference>
<dbReference type="EMBL" id="AF201286">
    <property type="protein sequence ID" value="AAG41219.1"/>
    <property type="molecule type" value="mRNA"/>
</dbReference>
<dbReference type="EMBL" id="BC018544">
    <property type="protein sequence ID" value="AAH18544.1"/>
    <property type="molecule type" value="mRNA"/>
</dbReference>
<dbReference type="EMBL" id="BC023761">
    <property type="protein sequence ID" value="AAH23761.1"/>
    <property type="molecule type" value="mRNA"/>
</dbReference>
<dbReference type="EMBL" id="BC145721">
    <property type="protein sequence ID" value="AAI45722.1"/>
    <property type="molecule type" value="mRNA"/>
</dbReference>
<dbReference type="EMBL" id="BC145723">
    <property type="protein sequence ID" value="AAI45724.1"/>
    <property type="molecule type" value="mRNA"/>
</dbReference>
<dbReference type="EMBL" id="AK018735">
    <property type="protein sequence ID" value="BAB31377.1"/>
    <property type="molecule type" value="mRNA"/>
</dbReference>
<dbReference type="EMBL" id="AK143608">
    <property type="protein sequence ID" value="BAE25460.1"/>
    <property type="molecule type" value="mRNA"/>
</dbReference>
<dbReference type="EMBL" id="CH466529">
    <property type="protein sequence ID" value="EDL19240.1"/>
    <property type="molecule type" value="Genomic_DNA"/>
</dbReference>
<dbReference type="CCDS" id="CCDS19776.1"/>
<dbReference type="RefSeq" id="NP_076399.4">
    <property type="nucleotide sequence ID" value="NM_023910.6"/>
</dbReference>
<dbReference type="SMR" id="Q9EQN3"/>
<dbReference type="BioGRID" id="219663">
    <property type="interactions" value="4"/>
</dbReference>
<dbReference type="FunCoup" id="Q9EQN3">
    <property type="interactions" value="245"/>
</dbReference>
<dbReference type="IntAct" id="Q9EQN3">
    <property type="interactions" value="5"/>
</dbReference>
<dbReference type="MINT" id="Q9EQN3"/>
<dbReference type="STRING" id="10090.ENSMUSP00000098108"/>
<dbReference type="GlyGen" id="Q9EQN3">
    <property type="glycosylation" value="3 sites, 1 N-linked glycan (1 site), 1 O-linked glycan (1 site)"/>
</dbReference>
<dbReference type="iPTMnet" id="Q9EQN3"/>
<dbReference type="PhosphoSitePlus" id="Q9EQN3"/>
<dbReference type="jPOST" id="Q9EQN3"/>
<dbReference type="PaxDb" id="10090-ENSMUSP00000098107"/>
<dbReference type="ProteomicsDB" id="263231"/>
<dbReference type="Pumba" id="Q9EQN3"/>
<dbReference type="Antibodypedia" id="1818">
    <property type="antibodies" value="152 antibodies from 25 providers"/>
</dbReference>
<dbReference type="DNASU" id="78829"/>
<dbReference type="Ensembl" id="ENSMUST00000100539.10">
    <property type="protein sequence ID" value="ENSMUSP00000098107.4"/>
    <property type="gene ID" value="ENSMUSG00000029723.17"/>
</dbReference>
<dbReference type="GeneID" id="78829"/>
<dbReference type="KEGG" id="mmu:78829"/>
<dbReference type="UCSC" id="uc009adu.2">
    <property type="organism name" value="mouse"/>
</dbReference>
<dbReference type="CTD" id="81628"/>
<dbReference type="VEuPathDB" id="HostDB:ENSMUSG00000029723"/>
<dbReference type="eggNOG" id="KOG4797">
    <property type="taxonomic scope" value="Eukaryota"/>
</dbReference>
<dbReference type="GeneTree" id="ENSGT00940000161400"/>
<dbReference type="HOGENOM" id="CLU_052826_0_0_1"/>
<dbReference type="InParanoid" id="Q9EQN3"/>
<dbReference type="OMA" id="YEQEMDH"/>
<dbReference type="TreeFam" id="TF338725"/>
<dbReference type="BioGRID-ORCS" id="78829">
    <property type="hits" value="2 hits in 79 CRISPR screens"/>
</dbReference>
<dbReference type="ChiTaRS" id="Tsc22d4">
    <property type="organism name" value="mouse"/>
</dbReference>
<dbReference type="PRO" id="PR:Q9EQN3"/>
<dbReference type="Proteomes" id="UP000000589">
    <property type="component" value="Chromosome 5"/>
</dbReference>
<dbReference type="RNAct" id="Q9EQN3">
    <property type="molecule type" value="protein"/>
</dbReference>
<dbReference type="Bgee" id="ENSMUSG00000029723">
    <property type="expression patterns" value="Expressed in granulocyte and 272 other cell types or tissues"/>
</dbReference>
<dbReference type="ExpressionAtlas" id="Q9EQN3">
    <property type="expression patterns" value="baseline and differential"/>
</dbReference>
<dbReference type="GO" id="GO:0005737">
    <property type="term" value="C:cytoplasm"/>
    <property type="evidence" value="ECO:0000314"/>
    <property type="project" value="UniProtKB"/>
</dbReference>
<dbReference type="GO" id="GO:0030425">
    <property type="term" value="C:dendrite"/>
    <property type="evidence" value="ECO:0000314"/>
    <property type="project" value="UniProtKB"/>
</dbReference>
<dbReference type="GO" id="GO:0005634">
    <property type="term" value="C:nucleus"/>
    <property type="evidence" value="ECO:0000314"/>
    <property type="project" value="UniProtKB"/>
</dbReference>
<dbReference type="GO" id="GO:0045202">
    <property type="term" value="C:synapse"/>
    <property type="evidence" value="ECO:0000314"/>
    <property type="project" value="UniProtKB"/>
</dbReference>
<dbReference type="GO" id="GO:0042593">
    <property type="term" value="P:glucose homeostasis"/>
    <property type="evidence" value="ECO:0000315"/>
    <property type="project" value="UniProtKB"/>
</dbReference>
<dbReference type="GO" id="GO:0000122">
    <property type="term" value="P:negative regulation of transcription by RNA polymerase II"/>
    <property type="evidence" value="ECO:0000315"/>
    <property type="project" value="UniProtKB"/>
</dbReference>
<dbReference type="GO" id="GO:0070050">
    <property type="term" value="P:neuron cellular homeostasis"/>
    <property type="evidence" value="ECO:0000315"/>
    <property type="project" value="UniProtKB"/>
</dbReference>
<dbReference type="GO" id="GO:1990138">
    <property type="term" value="P:neuron projection extension"/>
    <property type="evidence" value="ECO:0000315"/>
    <property type="project" value="UniProtKB"/>
</dbReference>
<dbReference type="GO" id="GO:0006970">
    <property type="term" value="P:response to osmotic stress"/>
    <property type="evidence" value="ECO:0000318"/>
    <property type="project" value="GO_Central"/>
</dbReference>
<dbReference type="CDD" id="cd21941">
    <property type="entry name" value="ZIP_TSC22D4"/>
    <property type="match status" value="1"/>
</dbReference>
<dbReference type="FunFam" id="1.20.5.490:FF:000002">
    <property type="entry name" value="TSC22 domain family, member 1"/>
    <property type="match status" value="1"/>
</dbReference>
<dbReference type="Gene3D" id="1.20.5.490">
    <property type="entry name" value="Single helix bin"/>
    <property type="match status" value="1"/>
</dbReference>
<dbReference type="InterPro" id="IPR000580">
    <property type="entry name" value="TSC22/Bun"/>
</dbReference>
<dbReference type="InterPro" id="IPR047862">
    <property type="entry name" value="TSC22/BUN_CS"/>
</dbReference>
<dbReference type="InterPro" id="IPR042553">
    <property type="entry name" value="TSC22D4"/>
</dbReference>
<dbReference type="PANTHER" id="PTHR47610">
    <property type="entry name" value="TSC22 DOMAIN FAMILY PROTEIN 4"/>
    <property type="match status" value="1"/>
</dbReference>
<dbReference type="PANTHER" id="PTHR47610:SF1">
    <property type="entry name" value="TSC22 DOMAIN FAMILY PROTEIN 4"/>
    <property type="match status" value="1"/>
</dbReference>
<dbReference type="Pfam" id="PF01166">
    <property type="entry name" value="TSC22"/>
    <property type="match status" value="1"/>
</dbReference>
<dbReference type="SUPFAM" id="SSF58026">
    <property type="entry name" value="Delta-sleep-inducing peptide immunoreactive peptide"/>
    <property type="match status" value="1"/>
</dbReference>
<dbReference type="PROSITE" id="PS01289">
    <property type="entry name" value="TSC22"/>
    <property type="match status" value="1"/>
</dbReference>
<name>T22D4_MOUSE</name>
<gene>
    <name evidence="1" type="primary">Tsc22d4</name>
    <name evidence="8" type="synonym">Thg1-pit</name>
</gene>
<sequence length="387" mass="39979">MSGGKKKSSFQITSVTTDYEGPGSPGASDSPVPPALAGPPPRLPNGDPNPDPGGRGTPRNGSPPPGAPASRFRVVKLPQGLGEPYRRGRWTCVDVYERDLEPPSFGRLLEGIRGASGGTGGRSLDSRLELASLGISTPIPQPGLSQGPTSWLRPPPTSPGPQARSFTGGLGQLAGPGKAKVETPPLSASPPQQRPPGPGTGDSAQTLPSLRVEVESGGSAAATPPLSRRRDGAVRLRMELVAPAETGKVPPTDSRPNSPALYFDASLVHKSPDPFGAAAAQSLSLARSMLAISGHLDSDDDSGSGSLVGIDNKIEQAMDLVKSHLMFAVREEVEVLKEQIRDLAERNAALEQENGLLRALASPEQLAQLPSSGLPRLGPSAPNGPSI</sequence>
<reference key="1">
    <citation type="journal article" date="2001" name="Gene">
        <title>Expression screening for Lhx3 downstream genes identifies Thg-1pit as a novel mouse gene involved in pituitary development.</title>
        <authorList>
            <person name="Fiorenza M.T."/>
            <person name="Mukhopadhyay M."/>
            <person name="Westphal H."/>
        </authorList>
    </citation>
    <scope>NUCLEOTIDE SEQUENCE [MRNA]</scope>
    <scope>DEVELOPMENTAL STAGE</scope>
    <scope>INDUCTION BY TGF-BETA</scope>
    <source>
        <strain>C57BL/6J</strain>
        <tissue>Embryo</tissue>
    </source>
</reference>
<reference key="2">
    <citation type="submission" date="1999-11" db="EMBL/GenBank/DDBJ databases">
        <title>Identification and characterization of a family of leucine zipper genes related to TSC22.</title>
        <authorList>
            <person name="Ershler M.A."/>
            <person name="Belyavsky A.V."/>
            <person name="Visser J.W.M."/>
        </authorList>
    </citation>
    <scope>NUCLEOTIDE SEQUENCE [MRNA]</scope>
</reference>
<reference key="3">
    <citation type="journal article" date="2005" name="Science">
        <title>The transcriptional landscape of the mammalian genome.</title>
        <authorList>
            <person name="Carninci P."/>
            <person name="Kasukawa T."/>
            <person name="Katayama S."/>
            <person name="Gough J."/>
            <person name="Frith M.C."/>
            <person name="Maeda N."/>
            <person name="Oyama R."/>
            <person name="Ravasi T."/>
            <person name="Lenhard B."/>
            <person name="Wells C."/>
            <person name="Kodzius R."/>
            <person name="Shimokawa K."/>
            <person name="Bajic V.B."/>
            <person name="Brenner S.E."/>
            <person name="Batalov S."/>
            <person name="Forrest A.R."/>
            <person name="Zavolan M."/>
            <person name="Davis M.J."/>
            <person name="Wilming L.G."/>
            <person name="Aidinis V."/>
            <person name="Allen J.E."/>
            <person name="Ambesi-Impiombato A."/>
            <person name="Apweiler R."/>
            <person name="Aturaliya R.N."/>
            <person name="Bailey T.L."/>
            <person name="Bansal M."/>
            <person name="Baxter L."/>
            <person name="Beisel K.W."/>
            <person name="Bersano T."/>
            <person name="Bono H."/>
            <person name="Chalk A.M."/>
            <person name="Chiu K.P."/>
            <person name="Choudhary V."/>
            <person name="Christoffels A."/>
            <person name="Clutterbuck D.R."/>
            <person name="Crowe M.L."/>
            <person name="Dalla E."/>
            <person name="Dalrymple B.P."/>
            <person name="de Bono B."/>
            <person name="Della Gatta G."/>
            <person name="di Bernardo D."/>
            <person name="Down T."/>
            <person name="Engstrom P."/>
            <person name="Fagiolini M."/>
            <person name="Faulkner G."/>
            <person name="Fletcher C.F."/>
            <person name="Fukushima T."/>
            <person name="Furuno M."/>
            <person name="Futaki S."/>
            <person name="Gariboldi M."/>
            <person name="Georgii-Hemming P."/>
            <person name="Gingeras T.R."/>
            <person name="Gojobori T."/>
            <person name="Green R.E."/>
            <person name="Gustincich S."/>
            <person name="Harbers M."/>
            <person name="Hayashi Y."/>
            <person name="Hensch T.K."/>
            <person name="Hirokawa N."/>
            <person name="Hill D."/>
            <person name="Huminiecki L."/>
            <person name="Iacono M."/>
            <person name="Ikeo K."/>
            <person name="Iwama A."/>
            <person name="Ishikawa T."/>
            <person name="Jakt M."/>
            <person name="Kanapin A."/>
            <person name="Katoh M."/>
            <person name="Kawasawa Y."/>
            <person name="Kelso J."/>
            <person name="Kitamura H."/>
            <person name="Kitano H."/>
            <person name="Kollias G."/>
            <person name="Krishnan S.P."/>
            <person name="Kruger A."/>
            <person name="Kummerfeld S.K."/>
            <person name="Kurochkin I.V."/>
            <person name="Lareau L.F."/>
            <person name="Lazarevic D."/>
            <person name="Lipovich L."/>
            <person name="Liu J."/>
            <person name="Liuni S."/>
            <person name="McWilliam S."/>
            <person name="Madan Babu M."/>
            <person name="Madera M."/>
            <person name="Marchionni L."/>
            <person name="Matsuda H."/>
            <person name="Matsuzawa S."/>
            <person name="Miki H."/>
            <person name="Mignone F."/>
            <person name="Miyake S."/>
            <person name="Morris K."/>
            <person name="Mottagui-Tabar S."/>
            <person name="Mulder N."/>
            <person name="Nakano N."/>
            <person name="Nakauchi H."/>
            <person name="Ng P."/>
            <person name="Nilsson R."/>
            <person name="Nishiguchi S."/>
            <person name="Nishikawa S."/>
            <person name="Nori F."/>
            <person name="Ohara O."/>
            <person name="Okazaki Y."/>
            <person name="Orlando V."/>
            <person name="Pang K.C."/>
            <person name="Pavan W.J."/>
            <person name="Pavesi G."/>
            <person name="Pesole G."/>
            <person name="Petrovsky N."/>
            <person name="Piazza S."/>
            <person name="Reed J."/>
            <person name="Reid J.F."/>
            <person name="Ring B.Z."/>
            <person name="Ringwald M."/>
            <person name="Rost B."/>
            <person name="Ruan Y."/>
            <person name="Salzberg S.L."/>
            <person name="Sandelin A."/>
            <person name="Schneider C."/>
            <person name="Schoenbach C."/>
            <person name="Sekiguchi K."/>
            <person name="Semple C.A."/>
            <person name="Seno S."/>
            <person name="Sessa L."/>
            <person name="Sheng Y."/>
            <person name="Shibata Y."/>
            <person name="Shimada H."/>
            <person name="Shimada K."/>
            <person name="Silva D."/>
            <person name="Sinclair B."/>
            <person name="Sperling S."/>
            <person name="Stupka E."/>
            <person name="Sugiura K."/>
            <person name="Sultana R."/>
            <person name="Takenaka Y."/>
            <person name="Taki K."/>
            <person name="Tammoja K."/>
            <person name="Tan S.L."/>
            <person name="Tang S."/>
            <person name="Taylor M.S."/>
            <person name="Tegner J."/>
            <person name="Teichmann S.A."/>
            <person name="Ueda H.R."/>
            <person name="van Nimwegen E."/>
            <person name="Verardo R."/>
            <person name="Wei C.L."/>
            <person name="Yagi K."/>
            <person name="Yamanishi H."/>
            <person name="Zabarovsky E."/>
            <person name="Zhu S."/>
            <person name="Zimmer A."/>
            <person name="Hide W."/>
            <person name="Bult C."/>
            <person name="Grimmond S.M."/>
            <person name="Teasdale R.D."/>
            <person name="Liu E.T."/>
            <person name="Brusic V."/>
            <person name="Quackenbush J."/>
            <person name="Wahlestedt C."/>
            <person name="Mattick J.S."/>
            <person name="Hume D.A."/>
            <person name="Kai C."/>
            <person name="Sasaki D."/>
            <person name="Tomaru Y."/>
            <person name="Fukuda S."/>
            <person name="Kanamori-Katayama M."/>
            <person name="Suzuki M."/>
            <person name="Aoki J."/>
            <person name="Arakawa T."/>
            <person name="Iida J."/>
            <person name="Imamura K."/>
            <person name="Itoh M."/>
            <person name="Kato T."/>
            <person name="Kawaji H."/>
            <person name="Kawagashira N."/>
            <person name="Kawashima T."/>
            <person name="Kojima M."/>
            <person name="Kondo S."/>
            <person name="Konno H."/>
            <person name="Nakano K."/>
            <person name="Ninomiya N."/>
            <person name="Nishio T."/>
            <person name="Okada M."/>
            <person name="Plessy C."/>
            <person name="Shibata K."/>
            <person name="Shiraki T."/>
            <person name="Suzuki S."/>
            <person name="Tagami M."/>
            <person name="Waki K."/>
            <person name="Watahiki A."/>
            <person name="Okamura-Oho Y."/>
            <person name="Suzuki H."/>
            <person name="Kawai J."/>
            <person name="Hayashizaki Y."/>
        </authorList>
    </citation>
    <scope>NUCLEOTIDE SEQUENCE [LARGE SCALE MRNA]</scope>
    <source>
        <strain>C57BL/6J</strain>
        <tissue>Kidney</tissue>
        <tissue>Spleen</tissue>
    </source>
</reference>
<reference key="4">
    <citation type="submission" date="2005-07" db="EMBL/GenBank/DDBJ databases">
        <authorList>
            <person name="Mural R.J."/>
            <person name="Adams M.D."/>
            <person name="Myers E.W."/>
            <person name="Smith H.O."/>
            <person name="Venter J.C."/>
        </authorList>
    </citation>
    <scope>NUCLEOTIDE SEQUENCE [LARGE SCALE GENOMIC DNA]</scope>
</reference>
<reference key="5">
    <citation type="journal article" date="2004" name="Genome Res.">
        <title>The status, quality, and expansion of the NIH full-length cDNA project: the Mammalian Gene Collection (MGC).</title>
        <authorList>
            <consortium name="The MGC Project Team"/>
        </authorList>
    </citation>
    <scope>NUCLEOTIDE SEQUENCE [LARGE SCALE MRNA]</scope>
</reference>
<reference key="6">
    <citation type="journal article" date="2007" name="FEBS J.">
        <title>Specific TSC22 domain transcripts are hypertonically induced and alternatively spliced to protect mouse kidney cells during osmotic stress.</title>
        <authorList>
            <person name="Fiol D.F."/>
            <person name="Mak S.K."/>
            <person name="Kueltz D."/>
        </authorList>
    </citation>
    <scope>TISSUE SPECIFICITY</scope>
    <scope>INDUCTION BY HYPEROSMOTIC STRESS</scope>
</reference>
<reference key="7">
    <citation type="journal article" date="2010" name="Cell">
        <title>A tissue-specific atlas of mouse protein phosphorylation and expression.</title>
        <authorList>
            <person name="Huttlin E.L."/>
            <person name="Jedrychowski M.P."/>
            <person name="Elias J.E."/>
            <person name="Goswami T."/>
            <person name="Rad R."/>
            <person name="Beausoleil S.A."/>
            <person name="Villen J."/>
            <person name="Haas W."/>
            <person name="Sowa M.E."/>
            <person name="Gygi S.P."/>
        </authorList>
    </citation>
    <scope>PHOSPHORYLATION [LARGE SCALE ANALYSIS] AT SER-165; THR-183; SER-187; SER-189; SER-219; THR-223; SER-254; SER-258 AND SER-271</scope>
    <scope>IDENTIFICATION BY MASS SPECTROMETRY [LARGE SCALE ANALYSIS]</scope>
    <source>
        <tissue>Brain</tissue>
        <tissue>Brown adipose tissue</tissue>
        <tissue>Heart</tissue>
        <tissue>Kidney</tissue>
        <tissue>Lung</tissue>
        <tissue>Spleen</tissue>
        <tissue>Testis</tissue>
    </source>
</reference>
<reference key="8">
    <citation type="journal article" date="2012" name="Cerebellum">
        <title>Subcellular TSC22D4 localization in cerebellum granule neurons of the mouse depends on development and differentiation.</title>
        <authorList>
            <person name="Canterini S."/>
            <person name="Bosco A."/>
            <person name="Carletti V."/>
            <person name="Fuso A."/>
            <person name="Curci A."/>
            <person name="Mangia F."/>
            <person name="Fiorenza M.T."/>
        </authorList>
    </citation>
    <scope>FUNCTION</scope>
    <scope>SUBCELLULAR LOCATION</scope>
    <scope>TISSUE SPECIFICITY</scope>
    <scope>DEVELOPMENTAL STAGE</scope>
</reference>
<reference key="9">
    <citation type="journal article" date="2013" name="EMBO Mol. Med.">
        <title>TSC22D4 is a molecular output of hepatic wasting metabolism.</title>
        <authorList>
            <person name="Jones A."/>
            <person name="Friedrich K."/>
            <person name="Rohm M."/>
            <person name="Schaefer M."/>
            <person name="Algire C."/>
            <person name="Kulozik P."/>
            <person name="Seibert O."/>
            <person name="Mueller-Decker K."/>
            <person name="Sijmonsma T."/>
            <person name="Strzoda D."/>
            <person name="Sticht C."/>
            <person name="Gretz N."/>
            <person name="Dallinga-Thie G.M."/>
            <person name="Leuchs B."/>
            <person name="Koegl M."/>
            <person name="Stremmel W."/>
            <person name="Diaz M.B."/>
            <person name="Herzig S."/>
        </authorList>
    </citation>
    <scope>FUNCTION</scope>
    <scope>TISSUE SPECIFICITY</scope>
    <scope>INDUCTION BY WASTING-ASSOCIATED LIVER METABOLISM</scope>
</reference>
<reference key="10">
    <citation type="journal article" date="2016" name="Nat. Commun.">
        <title>Control of diabetic hyperglycaemia and insulin resistance through TSC22D4.</title>
        <authorList>
            <person name="Ekim Uestuenel B."/>
            <person name="Friedrich K."/>
            <person name="Maida A."/>
            <person name="Wang X."/>
            <person name="Krones-Herzig A."/>
            <person name="Seibert O."/>
            <person name="Sommerfeld A."/>
            <person name="Jones A."/>
            <person name="Sijmonsma T.P."/>
            <person name="Sticht C."/>
            <person name="Gretz N."/>
            <person name="Fleming T."/>
            <person name="Nawroth P.P."/>
            <person name="Stremmel W."/>
            <person name="Rose A.J."/>
            <person name="Berriel-Diaz M."/>
            <person name="Blueher M."/>
            <person name="Herzig S."/>
        </authorList>
    </citation>
    <scope>FUNCTION</scope>
    <scope>TISSUE SPECIFICITY</scope>
</reference>
<feature type="chain" id="PRO_0000219375" description="TSC22 domain family protein 4">
    <location>
        <begin position="1"/>
        <end position="387"/>
    </location>
</feature>
<feature type="region of interest" description="Disordered" evidence="2">
    <location>
        <begin position="1"/>
        <end position="85"/>
    </location>
</feature>
<feature type="region of interest" description="Disordered" evidence="2">
    <location>
        <begin position="135"/>
        <end position="232"/>
    </location>
</feature>
<feature type="region of interest" description="Leucine-zipper">
    <location>
        <begin position="336"/>
        <end position="357"/>
    </location>
</feature>
<feature type="region of interest" description="Disordered" evidence="2">
    <location>
        <begin position="368"/>
        <end position="387"/>
    </location>
</feature>
<feature type="compositionally biased region" description="Pro residues" evidence="2">
    <location>
        <begin position="31"/>
        <end position="51"/>
    </location>
</feature>
<feature type="modified residue" description="Phosphothreonine" evidence="1">
    <location>
        <position position="57"/>
    </location>
</feature>
<feature type="modified residue" description="Phosphoserine" evidence="1">
    <location>
        <position position="62"/>
    </location>
</feature>
<feature type="modified residue" description="Phosphoserine" evidence="10">
    <location>
        <position position="165"/>
    </location>
</feature>
<feature type="modified residue" description="Phosphothreonine" evidence="10">
    <location>
        <position position="183"/>
    </location>
</feature>
<feature type="modified residue" description="Phosphoserine" evidence="10">
    <location>
        <position position="187"/>
    </location>
</feature>
<feature type="modified residue" description="Phosphoserine" evidence="10">
    <location>
        <position position="189"/>
    </location>
</feature>
<feature type="modified residue" description="Phosphoserine" evidence="10">
    <location>
        <position position="219"/>
    </location>
</feature>
<feature type="modified residue" description="Phosphothreonine" evidence="10">
    <location>
        <position position="223"/>
    </location>
</feature>
<feature type="modified residue" description="Phosphoserine" evidence="10">
    <location>
        <position position="254"/>
    </location>
</feature>
<feature type="modified residue" description="Phosphoserine" evidence="10">
    <location>
        <position position="258"/>
    </location>
</feature>
<feature type="modified residue" description="Phosphoserine" evidence="10">
    <location>
        <position position="271"/>
    </location>
</feature>
<feature type="modified residue" description="Phosphoserine" evidence="1">
    <location>
        <position position="362"/>
    </location>
</feature>
<feature type="sequence conflict" description="In Ref. 1; AAK02018." evidence="9" ref="1">
    <original>E</original>
    <variation>K</variation>
    <location>
        <position position="97"/>
    </location>
</feature>
<feature type="sequence conflict" description="In Ref. 2; AAG41219." evidence="9" ref="2">
    <original>Q</original>
    <variation>H</variation>
    <location>
        <position position="339"/>
    </location>
</feature>
<accession>Q9EQN3</accession>
<accession>Q99PD5</accession>
<accession>Q9D2V9</accession>
<organism>
    <name type="scientific">Mus musculus</name>
    <name type="common">Mouse</name>
    <dbReference type="NCBI Taxonomy" id="10090"/>
    <lineage>
        <taxon>Eukaryota</taxon>
        <taxon>Metazoa</taxon>
        <taxon>Chordata</taxon>
        <taxon>Craniata</taxon>
        <taxon>Vertebrata</taxon>
        <taxon>Euteleostomi</taxon>
        <taxon>Mammalia</taxon>
        <taxon>Eutheria</taxon>
        <taxon>Euarchontoglires</taxon>
        <taxon>Glires</taxon>
        <taxon>Rodentia</taxon>
        <taxon>Myomorpha</taxon>
        <taxon>Muroidea</taxon>
        <taxon>Muridae</taxon>
        <taxon>Murinae</taxon>
        <taxon>Mus</taxon>
        <taxon>Mus</taxon>
    </lineage>
</organism>
<comment type="function">
    <text evidence="5 6 7">Binds DNA and acts as a transcriptional repressor (PubMed:27827363). Involved in the regulation of systematic glucose homeostasis and insulin sensitivity, via transcriptional repression of downstream insulin signaling targets such as OBP2A/LCN13 (PubMed:27827363). Acts as a negative regulator of lipogenic gene expression in hepatocytes and thereby mediates the control of very low-density lipoprotein release (PubMed:23307490). May play a role in neurite elongation and survival (PubMed:20878296).</text>
</comment>
<comment type="subunit">
    <text evidence="1">Forms a homodimer or heterodimer (By similarity). Forms a heterodimer with TSC22D1 isoforms 1 and 2 (By similarity). Interacts with NRBP1 (By similarity).</text>
</comment>
<comment type="interaction">
    <interactant intactId="EBI-7821198">
        <id>Q9EQN3</id>
    </interactant>
    <interactant intactId="EBI-773597">
        <id>Q9Z0X1</id>
        <label>Aifm1</label>
    </interactant>
    <organismsDiffer>false</organismsDiffer>
    <experiments>4</experiments>
</comment>
<comment type="interaction">
    <interactant intactId="EBI-7821198">
        <id>Q9EQN3</id>
    </interactant>
    <interactant intactId="EBI-8296837">
        <id>P62500</id>
        <label>Tsc22d1</label>
    </interactant>
    <organismsDiffer>false</organismsDiffer>
    <experiments>2</experiments>
</comment>
<comment type="subcellular location">
    <subcellularLocation>
        <location evidence="5">Nucleus</location>
    </subcellularLocation>
    <subcellularLocation>
        <location evidence="5">Cytoplasm</location>
    </subcellularLocation>
    <subcellularLocation>
        <location evidence="5">Cell projection</location>
        <location evidence="5">Dendrite</location>
    </subcellularLocation>
    <subcellularLocation>
        <location evidence="5">Synapse</location>
    </subcellularLocation>
    <text evidence="5">Localizes away from the nucleus to neurite processes and synaptic termini as cerebellar granular neurons differentiate (PubMed:20878296). Accumulates in the cytoplasm of differentiated Purkinje cells (PubMed:20878296). Localized to both the cytoplasm and nucleus in immature cerebellar granular neurons and atrophic Purkinje cells (PubMed:20878296).</text>
</comment>
<comment type="tissue specificity">
    <text evidence="4 5 6 7">Expressed in the liver (at protein level) (PubMed:23307490, PubMed:27827363). Expressed in Purkinje cells and proliferating cerebellar granular neurons (at protein level) (PubMed:20878296). Expressed in the cortex, medulla and papilla of the kidney.</text>
</comment>
<comment type="developmental stage">
    <text evidence="3 5">Expression starts at 8.5 dpc and undergoes a second peak of activation at 12.5 dpc (PubMed:11707329). At 12.5 dpc, expression encompasses the entire central nervous system, with highest levels in the dorsal root and trigeminal ganglia (PubMed:11707329). Expressed in the granule neurons and Purkinje cells in the external and internal granular layers of the cerebellum from postnatal day 6 (PubMed:20878296).</text>
</comment>
<comment type="induction">
    <text evidence="3 4 6">Induced by TGF-beta treatment (PubMed:11707329). Induced by a wasting-associated liver metabolism as a result of a methionine-choline deficient diet or cancer-induced cachectic phenotype (PubMed:23307490). Induced by renal hyperosmotic stress (PubMed:17147695).</text>
</comment>
<comment type="miscellaneous">
    <text evidence="6 7">Involved in the development of hyperglycaemia and insulin resistance in diabetic mouse models (PubMed:27827363). May be involved in altered hepatic lipid handling as part of cancer-induced cachexia (PubMed:23307490).</text>
</comment>
<comment type="similarity">
    <text evidence="9">Belongs to the TSC-22/Dip/Bun family.</text>
</comment>
<comment type="sequence caution" evidence="9">
    <conflict type="frameshift">
        <sequence resource="EMBL-CDS" id="AAK02018"/>
    </conflict>
</comment>
<protein>
    <recommendedName>
        <fullName evidence="1">TSC22 domain family protein 4</fullName>
    </recommendedName>
    <alternativeName>
        <fullName>TSC22-related-inducible leucine zipper protein 2</fullName>
    </alternativeName>
</protein>
<proteinExistence type="evidence at protein level"/>
<evidence type="ECO:0000250" key="1">
    <source>
        <dbReference type="UniProtKB" id="Q9Y3Q8"/>
    </source>
</evidence>
<evidence type="ECO:0000256" key="2">
    <source>
        <dbReference type="SAM" id="MobiDB-lite"/>
    </source>
</evidence>
<evidence type="ECO:0000269" key="3">
    <source>
    </source>
</evidence>
<evidence type="ECO:0000269" key="4">
    <source>
    </source>
</evidence>
<evidence type="ECO:0000269" key="5">
    <source>
    </source>
</evidence>
<evidence type="ECO:0000269" key="6">
    <source>
    </source>
</evidence>
<evidence type="ECO:0000269" key="7">
    <source>
    </source>
</evidence>
<evidence type="ECO:0000303" key="8">
    <source>
    </source>
</evidence>
<evidence type="ECO:0000305" key="9"/>
<evidence type="ECO:0007744" key="10">
    <source>
    </source>
</evidence>
<keyword id="KW-0966">Cell projection</keyword>
<keyword id="KW-0963">Cytoplasm</keyword>
<keyword id="KW-0539">Nucleus</keyword>
<keyword id="KW-0597">Phosphoprotein</keyword>
<keyword id="KW-1185">Reference proteome</keyword>
<keyword id="KW-0678">Repressor</keyword>
<keyword id="KW-0770">Synapse</keyword>
<keyword id="KW-0804">Transcription</keyword>
<keyword id="KW-0805">Transcription regulation</keyword>